<accession>Q2KDF0</accession>
<gene>
    <name evidence="1" type="primary">pyrF</name>
    <name type="ordered locus">RHE_CH00314</name>
</gene>
<name>PYRF_RHIEC</name>
<keyword id="KW-0210">Decarboxylase</keyword>
<keyword id="KW-0456">Lyase</keyword>
<keyword id="KW-0665">Pyrimidine biosynthesis</keyword>
<keyword id="KW-1185">Reference proteome</keyword>
<sequence length="235" mass="24633">MDARERLIVGLDVPTIGEAERLVSTLGDDILFYKIGYQLVFAGGLEFARDLAASGKKIFLDMKLLDIDNTVASGVENIAKMGMSMLTLHAYPKAMRAAVEAAAGSGLCLLGVTVLTSMDAEDLAEAGYNQDPHSLVLSRAGQARAAGMGGIVCSAAEAAEVREVVGPDMAIVTPGIRPTGSDKGDQKRVMTPFDALKAGSTHLVVGRPIVKAPDPKQAARAVLNEMVGALWPANR</sequence>
<comment type="function">
    <text evidence="1">Catalyzes the decarboxylation of orotidine 5'-monophosphate (OMP) to uridine 5'-monophosphate (UMP).</text>
</comment>
<comment type="catalytic activity">
    <reaction evidence="1">
        <text>orotidine 5'-phosphate + H(+) = UMP + CO2</text>
        <dbReference type="Rhea" id="RHEA:11596"/>
        <dbReference type="ChEBI" id="CHEBI:15378"/>
        <dbReference type="ChEBI" id="CHEBI:16526"/>
        <dbReference type="ChEBI" id="CHEBI:57538"/>
        <dbReference type="ChEBI" id="CHEBI:57865"/>
        <dbReference type="EC" id="4.1.1.23"/>
    </reaction>
</comment>
<comment type="pathway">
    <text evidence="1">Pyrimidine metabolism; UMP biosynthesis via de novo pathway; UMP from orotate: step 2/2.</text>
</comment>
<comment type="subunit">
    <text evidence="1">Homodimer.</text>
</comment>
<comment type="similarity">
    <text evidence="1">Belongs to the OMP decarboxylase family. Type 1 subfamily.</text>
</comment>
<proteinExistence type="inferred from homology"/>
<reference key="1">
    <citation type="journal article" date="2006" name="Proc. Natl. Acad. Sci. U.S.A.">
        <title>The partitioned Rhizobium etli genome: genetic and metabolic redundancy in seven interacting replicons.</title>
        <authorList>
            <person name="Gonzalez V."/>
            <person name="Santamaria R.I."/>
            <person name="Bustos P."/>
            <person name="Hernandez-Gonzalez I."/>
            <person name="Medrano-Soto A."/>
            <person name="Moreno-Hagelsieb G."/>
            <person name="Janga S.C."/>
            <person name="Ramirez M.A."/>
            <person name="Jimenez-Jacinto V."/>
            <person name="Collado-Vides J."/>
            <person name="Davila G."/>
        </authorList>
    </citation>
    <scope>NUCLEOTIDE SEQUENCE [LARGE SCALE GENOMIC DNA]</scope>
    <source>
        <strain>ATCC 51251 / DSM 11541 / JCM 21823 / NBRC 15573 / CFN 42</strain>
    </source>
</reference>
<evidence type="ECO:0000255" key="1">
    <source>
        <dbReference type="HAMAP-Rule" id="MF_01200"/>
    </source>
</evidence>
<organism>
    <name type="scientific">Rhizobium etli (strain ATCC 51251 / DSM 11541 / JCM 21823 / NBRC 15573 / CFN 42)</name>
    <dbReference type="NCBI Taxonomy" id="347834"/>
    <lineage>
        <taxon>Bacteria</taxon>
        <taxon>Pseudomonadati</taxon>
        <taxon>Pseudomonadota</taxon>
        <taxon>Alphaproteobacteria</taxon>
        <taxon>Hyphomicrobiales</taxon>
        <taxon>Rhizobiaceae</taxon>
        <taxon>Rhizobium/Agrobacterium group</taxon>
        <taxon>Rhizobium</taxon>
    </lineage>
</organism>
<feature type="chain" id="PRO_0000241896" description="Orotidine 5'-phosphate decarboxylase">
    <location>
        <begin position="1"/>
        <end position="235"/>
    </location>
</feature>
<feature type="active site" description="Proton donor" evidence="1">
    <location>
        <position position="63"/>
    </location>
</feature>
<feature type="binding site" evidence="1">
    <location>
        <position position="12"/>
    </location>
    <ligand>
        <name>substrate</name>
    </ligand>
</feature>
<feature type="binding site" evidence="1">
    <location>
        <position position="34"/>
    </location>
    <ligand>
        <name>substrate</name>
    </ligand>
</feature>
<feature type="binding site" evidence="1">
    <location>
        <begin position="61"/>
        <end position="70"/>
    </location>
    <ligand>
        <name>substrate</name>
    </ligand>
</feature>
<feature type="binding site" evidence="1">
    <location>
        <position position="116"/>
    </location>
    <ligand>
        <name>substrate</name>
    </ligand>
</feature>
<feature type="binding site" evidence="1">
    <location>
        <position position="177"/>
    </location>
    <ligand>
        <name>substrate</name>
    </ligand>
</feature>
<feature type="binding site" evidence="1">
    <location>
        <position position="186"/>
    </location>
    <ligand>
        <name>substrate</name>
    </ligand>
</feature>
<feature type="binding site" evidence="1">
    <location>
        <position position="206"/>
    </location>
    <ligand>
        <name>substrate</name>
    </ligand>
</feature>
<feature type="binding site" evidence="1">
    <location>
        <position position="207"/>
    </location>
    <ligand>
        <name>substrate</name>
    </ligand>
</feature>
<protein>
    <recommendedName>
        <fullName evidence="1">Orotidine 5'-phosphate decarboxylase</fullName>
        <ecNumber evidence="1">4.1.1.23</ecNumber>
    </recommendedName>
    <alternativeName>
        <fullName evidence="1">OMP decarboxylase</fullName>
        <shortName evidence="1">OMPDCase</shortName>
        <shortName evidence="1">OMPdecase</shortName>
    </alternativeName>
</protein>
<dbReference type="EC" id="4.1.1.23" evidence="1"/>
<dbReference type="EMBL" id="CP000133">
    <property type="protein sequence ID" value="ABC89136.1"/>
    <property type="molecule type" value="Genomic_DNA"/>
</dbReference>
<dbReference type="RefSeq" id="WP_011423698.1">
    <property type="nucleotide sequence ID" value="NC_007761.1"/>
</dbReference>
<dbReference type="SMR" id="Q2KDF0"/>
<dbReference type="KEGG" id="ret:RHE_CH00314"/>
<dbReference type="eggNOG" id="COG0284">
    <property type="taxonomic scope" value="Bacteria"/>
</dbReference>
<dbReference type="HOGENOM" id="CLU_067069_1_0_5"/>
<dbReference type="OrthoDB" id="9806203at2"/>
<dbReference type="UniPathway" id="UPA00070">
    <property type="reaction ID" value="UER00120"/>
</dbReference>
<dbReference type="Proteomes" id="UP000001936">
    <property type="component" value="Chromosome"/>
</dbReference>
<dbReference type="GO" id="GO:0005829">
    <property type="term" value="C:cytosol"/>
    <property type="evidence" value="ECO:0007669"/>
    <property type="project" value="TreeGrafter"/>
</dbReference>
<dbReference type="GO" id="GO:0004590">
    <property type="term" value="F:orotidine-5'-phosphate decarboxylase activity"/>
    <property type="evidence" value="ECO:0007669"/>
    <property type="project" value="UniProtKB-UniRule"/>
</dbReference>
<dbReference type="GO" id="GO:0006207">
    <property type="term" value="P:'de novo' pyrimidine nucleobase biosynthetic process"/>
    <property type="evidence" value="ECO:0007669"/>
    <property type="project" value="InterPro"/>
</dbReference>
<dbReference type="GO" id="GO:0044205">
    <property type="term" value="P:'de novo' UMP biosynthetic process"/>
    <property type="evidence" value="ECO:0007669"/>
    <property type="project" value="UniProtKB-UniRule"/>
</dbReference>
<dbReference type="CDD" id="cd04725">
    <property type="entry name" value="OMP_decarboxylase_like"/>
    <property type="match status" value="1"/>
</dbReference>
<dbReference type="Gene3D" id="3.20.20.70">
    <property type="entry name" value="Aldolase class I"/>
    <property type="match status" value="1"/>
</dbReference>
<dbReference type="HAMAP" id="MF_01200_B">
    <property type="entry name" value="OMPdecase_type1_B"/>
    <property type="match status" value="1"/>
</dbReference>
<dbReference type="InterPro" id="IPR013785">
    <property type="entry name" value="Aldolase_TIM"/>
</dbReference>
<dbReference type="InterPro" id="IPR014732">
    <property type="entry name" value="OMPdecase"/>
</dbReference>
<dbReference type="InterPro" id="IPR018089">
    <property type="entry name" value="OMPdecase_AS"/>
</dbReference>
<dbReference type="InterPro" id="IPR047596">
    <property type="entry name" value="OMPdecase_bac"/>
</dbReference>
<dbReference type="InterPro" id="IPR001754">
    <property type="entry name" value="OMPdeCOase_dom"/>
</dbReference>
<dbReference type="InterPro" id="IPR011060">
    <property type="entry name" value="RibuloseP-bd_barrel"/>
</dbReference>
<dbReference type="NCBIfam" id="NF001273">
    <property type="entry name" value="PRK00230.1"/>
    <property type="match status" value="1"/>
</dbReference>
<dbReference type="NCBIfam" id="TIGR01740">
    <property type="entry name" value="pyrF"/>
    <property type="match status" value="1"/>
</dbReference>
<dbReference type="PANTHER" id="PTHR32119">
    <property type="entry name" value="OROTIDINE 5'-PHOSPHATE DECARBOXYLASE"/>
    <property type="match status" value="1"/>
</dbReference>
<dbReference type="PANTHER" id="PTHR32119:SF2">
    <property type="entry name" value="OROTIDINE 5'-PHOSPHATE DECARBOXYLASE"/>
    <property type="match status" value="1"/>
</dbReference>
<dbReference type="Pfam" id="PF00215">
    <property type="entry name" value="OMPdecase"/>
    <property type="match status" value="1"/>
</dbReference>
<dbReference type="SMART" id="SM00934">
    <property type="entry name" value="OMPdecase"/>
    <property type="match status" value="1"/>
</dbReference>
<dbReference type="SUPFAM" id="SSF51366">
    <property type="entry name" value="Ribulose-phoshate binding barrel"/>
    <property type="match status" value="1"/>
</dbReference>
<dbReference type="PROSITE" id="PS00156">
    <property type="entry name" value="OMPDECASE"/>
    <property type="match status" value="1"/>
</dbReference>